<name>ALA1_ARATH</name>
<accession>P98204</accession>
<proteinExistence type="evidence at transcript level"/>
<gene>
    <name evidence="6" type="primary">ALA1</name>
    <name evidence="10" type="ordered locus">At5g04930</name>
    <name evidence="11" type="ORF">MUG13.22</name>
</gene>
<sequence length="1158" mass="130329">MDPRKSIDKPPHHDPILGVSSRWSVSSKDNKEVTFGDLGSKRIRHGSAGADSEMLSMSQKEIKDEDARLIYINDPDRTNERFEFTGNSIKTAKYSVFTFLPRNLFEQFHRVAYIYFLVIAVLNQLPQLAVFGRGASIMPLAFVLLVSAIKDAYEDFRRHRSDRVENNRLALVFEDHQFREKKWKHIRVGEVIKVQSNQTLPCDMVLLATSDPTGVVYVQTTNLDGESNLKTRYAKQETLLKAADMESFNGFIKCEKPNRNIYGFQANMEIDGRRLSLGPSNIILRGCELKNTAWALGVVVYAGGETKAMLNNSGAPSKRSRLETRMNLEIILLSLFLIVLCTIAAATAAVWLRTHRDDLDTILFYRRKDYSERPGGKNYKYYGWGWEIFFTFFMAVIVYQIMIPISLYISMELVRIGQAYFMTNDDQMYDESSDSSFQCRALNINEDLGQIKYLFSDKTGTLTDNKMEFQCACIEGVDYSDREPADSEHPGYSIEVDGIILKPKMRVRVDPVLLQLTKTGKATEEAKRANEFFLSLAACNTIVPIVSNTSDPNVKLVDYQGESPDEQALVYAAAAYGFLLIERTSGHIVINVRGETQRFNVLGLHEFDSDRKRMSVILGCPDMSVKLFVKGADSSMFGVMDESYGGVIHETKIQLHAYSSDGLRTLVVGMRELNDSEFEQWHSSFEAASTALIGRAGLLRKVAGNIETNLRIVGATAIEDKLQRGVPEAIESLRIAGIKVWVLTGDKQETAISIGFSSRLLTRNMRQIVINSNSLDSCRRSLEEANASIASNDESDNVALIIDGTSLIYVLDNDLEDVLFQVACKCSAILCCRVAPFQKAGIVALVKNRTSDMTLAIGDGANDVSMIQMADVGVGISGQEGRQAVMASDFAMGQFRFLVPLLLVHGHWNYQRMGYMILYNFYRNAVFVLILFWYVLFTCYTLTTAITEWSSVLYSVIYTAIPTIIIGILDKDLGRQTLLDHPQLYGVGQRAEGYSTTLFWYTMIDTIWQSAAIFFIPMFAYWGSTIDTSSLGDLWTIAAVVVVNLHLAMDVIRWNWITHAAIWGSIVAACICVIVIDVIPTLPGYWAIFQVGKTWMFWFCLLAIVVTSLLPRFAIKFLVEYYRPSDVRIAREAEKLGTFRESQPVGVEMNLIQDPPRR</sequence>
<reference key="1">
    <citation type="journal article" date="2000" name="Plant Cell">
        <title>Chilling tolerance in Arabidopsis involves ALA1, a member of a new family of putative aminophospholipid translocases.</title>
        <authorList>
            <person name="Gomes E."/>
            <person name="Jakobsen M.K."/>
            <person name="Axelsen K.B."/>
            <person name="Geisler M."/>
            <person name="Palmgren M.G."/>
        </authorList>
    </citation>
    <scope>NUCLEOTIDE SEQUENCE [MRNA]</scope>
    <scope>GENE FAMILY</scope>
    <scope>FUNCTION</scope>
    <scope>TISSUE SPECIFICITY</scope>
</reference>
<reference key="2">
    <citation type="journal article" date="1997" name="DNA Res.">
        <title>Structural analysis of Arabidopsis thaliana chromosome 5. I. Sequence features of the 1.6 Mb regions covered by twenty physically assigned P1 clones.</title>
        <authorList>
            <person name="Sato S."/>
            <person name="Kotani H."/>
            <person name="Nakamura Y."/>
            <person name="Kaneko T."/>
            <person name="Asamizu E."/>
            <person name="Fukami M."/>
            <person name="Miyajima N."/>
            <person name="Tabata S."/>
        </authorList>
    </citation>
    <scope>NUCLEOTIDE SEQUENCE [LARGE SCALE GENOMIC DNA]</scope>
    <source>
        <strain>cv. Columbia</strain>
    </source>
</reference>
<reference key="3">
    <citation type="journal article" date="2017" name="Plant J.">
        <title>Araport11: a complete reannotation of the Arabidopsis thaliana reference genome.</title>
        <authorList>
            <person name="Cheng C.Y."/>
            <person name="Krishnakumar V."/>
            <person name="Chan A.P."/>
            <person name="Thibaud-Nissen F."/>
            <person name="Schobel S."/>
            <person name="Town C.D."/>
        </authorList>
    </citation>
    <scope>GENOME REANNOTATION</scope>
    <source>
        <strain>cv. Columbia</strain>
    </source>
</reference>
<reference key="4">
    <citation type="journal article" date="2001" name="Plant Physiol.">
        <title>Inventory of the superfamily of P-type ion pumps in Arabidopsis.</title>
        <authorList>
            <person name="Axelsen K.B."/>
            <person name="Palmgren M.G."/>
        </authorList>
    </citation>
    <scope>GENE FAMILY</scope>
    <scope>NOMENCLATURE</scope>
</reference>
<reference key="5">
    <citation type="journal article" date="2012" name="PLoS ONE">
        <title>A putative plant aminophospholipid flippase, the Arabidopsis P4 ATPase ALA1, localizes to the plasma membrane following association with a beta-subunit.</title>
        <authorList>
            <person name="Lopez-Marques R.L."/>
            <person name="Poulsen L.R."/>
            <person name="Palmgren M.G."/>
        </authorList>
    </citation>
    <scope>SUBCELLULAR LOCATION</scope>
</reference>
<protein>
    <recommendedName>
        <fullName evidence="6">Phospholipid-transporting ATPase 1</fullName>
        <shortName evidence="6">AtALA1</shortName>
        <ecNumber evidence="9">7.6.2.1</ecNumber>
    </recommendedName>
    <alternativeName>
        <fullName evidence="7">Aminophospholipid flippase 1</fullName>
    </alternativeName>
</protein>
<feature type="chain" id="PRO_0000046385" description="Phospholipid-transporting ATPase 1">
    <location>
        <begin position="1"/>
        <end position="1158"/>
    </location>
</feature>
<feature type="topological domain" description="Cytoplasmic" evidence="2">
    <location>
        <begin position="1"/>
        <end position="100"/>
    </location>
</feature>
<feature type="transmembrane region" description="Helical" evidence="2">
    <location>
        <begin position="101"/>
        <end position="122"/>
    </location>
</feature>
<feature type="topological domain" description="Extracellular" evidence="2">
    <location>
        <begin position="123"/>
        <end position="127"/>
    </location>
</feature>
<feature type="transmembrane region" description="Helical" evidence="2">
    <location>
        <begin position="128"/>
        <end position="150"/>
    </location>
</feature>
<feature type="topological domain" description="Cytoplasmic" evidence="2">
    <location>
        <begin position="151"/>
        <end position="329"/>
    </location>
</feature>
<feature type="transmembrane region" description="Helical" evidence="2">
    <location>
        <begin position="330"/>
        <end position="351"/>
    </location>
</feature>
<feature type="topological domain" description="Extracellular" evidence="2">
    <location>
        <begin position="352"/>
        <end position="391"/>
    </location>
</feature>
<feature type="transmembrane region" description="Helical" evidence="2">
    <location>
        <begin position="392"/>
        <end position="409"/>
    </location>
</feature>
<feature type="topological domain" description="Cytoplasmic" evidence="2">
    <location>
        <begin position="410"/>
        <end position="914"/>
    </location>
</feature>
<feature type="transmembrane region" description="Helical" evidence="2">
    <location>
        <begin position="915"/>
        <end position="934"/>
    </location>
</feature>
<feature type="topological domain" description="Extracellular" evidence="2">
    <location>
        <begin position="935"/>
        <end position="948"/>
    </location>
</feature>
<feature type="transmembrane region" description="Helical" evidence="2">
    <location>
        <begin position="949"/>
        <end position="968"/>
    </location>
</feature>
<feature type="topological domain" description="Cytoplasmic" evidence="2">
    <location>
        <begin position="969"/>
        <end position="998"/>
    </location>
</feature>
<feature type="transmembrane region" description="Helical" evidence="2">
    <location>
        <begin position="999"/>
        <end position="1020"/>
    </location>
</feature>
<feature type="topological domain" description="Extracellular" evidence="2">
    <location>
        <begin position="1021"/>
        <end position="1027"/>
    </location>
</feature>
<feature type="transmembrane region" description="Helical" evidence="2">
    <location>
        <begin position="1028"/>
        <end position="1050"/>
    </location>
</feature>
<feature type="topological domain" description="Cytoplasmic" evidence="2">
    <location>
        <begin position="1051"/>
        <end position="1056"/>
    </location>
</feature>
<feature type="transmembrane region" description="Helical" evidence="2">
    <location>
        <begin position="1057"/>
        <end position="1077"/>
    </location>
</feature>
<feature type="topological domain" description="Extracellular" evidence="2">
    <location>
        <begin position="1078"/>
        <end position="1090"/>
    </location>
</feature>
<feature type="transmembrane region" description="Helical" evidence="2">
    <location>
        <begin position="1091"/>
        <end position="1115"/>
    </location>
</feature>
<feature type="topological domain" description="Cytoplasmic" evidence="2">
    <location>
        <begin position="1116"/>
        <end position="1158"/>
    </location>
</feature>
<feature type="region of interest" description="Disordered" evidence="3">
    <location>
        <begin position="1"/>
        <end position="30"/>
    </location>
</feature>
<feature type="compositionally biased region" description="Basic and acidic residues" evidence="3">
    <location>
        <begin position="1"/>
        <end position="15"/>
    </location>
</feature>
<feature type="active site" description="4-aspartylphosphate intermediate" evidence="1">
    <location>
        <position position="457"/>
    </location>
</feature>
<feature type="binding site" evidence="1">
    <location>
        <position position="859"/>
    </location>
    <ligand>
        <name>Mg(2+)</name>
        <dbReference type="ChEBI" id="CHEBI:18420"/>
    </ligand>
</feature>
<feature type="binding site" evidence="1">
    <location>
        <position position="863"/>
    </location>
    <ligand>
        <name>Mg(2+)</name>
        <dbReference type="ChEBI" id="CHEBI:18420"/>
    </ligand>
</feature>
<keyword id="KW-0067">ATP-binding</keyword>
<keyword id="KW-1003">Cell membrane</keyword>
<keyword id="KW-0256">Endoplasmic reticulum</keyword>
<keyword id="KW-0460">Magnesium</keyword>
<keyword id="KW-0472">Membrane</keyword>
<keyword id="KW-0479">Metal-binding</keyword>
<keyword id="KW-0547">Nucleotide-binding</keyword>
<keyword id="KW-1185">Reference proteome</keyword>
<keyword id="KW-1278">Translocase</keyword>
<keyword id="KW-0812">Transmembrane</keyword>
<keyword id="KW-1133">Transmembrane helix</keyword>
<comment type="function">
    <text evidence="4">Involved in transport of phospholipids. Contributes to transmembrane flipping of lipids. Has activity with phosphatidylserine and with a much lower efficiency with phosphatidylethanolamine, but not with phosphatidylcholine.</text>
</comment>
<comment type="catalytic activity">
    <reaction evidence="4">
        <text>ATP + H2O + phospholipidSide 1 = ADP + phosphate + phospholipidSide 2.</text>
        <dbReference type="EC" id="7.6.2.1"/>
    </reaction>
</comment>
<comment type="subcellular location">
    <subcellularLocation>
        <location evidence="5">Endoplasmic reticulum membrane</location>
        <topology evidence="2">Multi-pass membrane protein</topology>
    </subcellularLocation>
    <subcellularLocation>
        <location evidence="5">Cell membrane</location>
        <topology evidence="2">Multi-pass membrane protein</topology>
    </subcellularLocation>
    <text evidence="5">Requires the presence of an ALIS protein to exit the endoplasmic reticulum to the cell membrane.</text>
</comment>
<comment type="tissue specificity">
    <text evidence="4">Expressed in roots, flowers, anthers, leaves, vascular tissues and stems.</text>
</comment>
<comment type="miscellaneous">
    <text evidence="4">Knockdown mutants are cold sensitive.</text>
</comment>
<comment type="similarity">
    <text evidence="8">Belongs to the cation transport ATPase (P-type) (TC 3.A.3) family. Type IV subfamily.</text>
</comment>
<dbReference type="EC" id="7.6.2.1" evidence="9"/>
<dbReference type="EMBL" id="AF175769">
    <property type="protein sequence ID" value="AAG01899.1"/>
    <property type="molecule type" value="mRNA"/>
</dbReference>
<dbReference type="EMBL" id="AB005245">
    <property type="protein sequence ID" value="BAB11515.1"/>
    <property type="molecule type" value="Genomic_DNA"/>
</dbReference>
<dbReference type="EMBL" id="CP002688">
    <property type="protein sequence ID" value="AED90805.1"/>
    <property type="molecule type" value="Genomic_DNA"/>
</dbReference>
<dbReference type="RefSeq" id="NP_568146.1">
    <property type="nucleotide sequence ID" value="NM_120575.3"/>
</dbReference>
<dbReference type="SMR" id="P98204"/>
<dbReference type="BioGRID" id="15654">
    <property type="interactions" value="4"/>
</dbReference>
<dbReference type="FunCoup" id="P98204">
    <property type="interactions" value="469"/>
</dbReference>
<dbReference type="IntAct" id="P98204">
    <property type="interactions" value="2"/>
</dbReference>
<dbReference type="STRING" id="3702.P98204"/>
<dbReference type="TCDB" id="3.A.3.8.7">
    <property type="family name" value="the p-type atpase (p-atpase) superfamily"/>
</dbReference>
<dbReference type="iPTMnet" id="P98204"/>
<dbReference type="PaxDb" id="3702-AT5G04930.1"/>
<dbReference type="ProteomicsDB" id="244924"/>
<dbReference type="EnsemblPlants" id="AT5G04930.1">
    <property type="protein sequence ID" value="AT5G04930.1"/>
    <property type="gene ID" value="AT5G04930"/>
</dbReference>
<dbReference type="GeneID" id="830375"/>
<dbReference type="Gramene" id="AT5G04930.1">
    <property type="protein sequence ID" value="AT5G04930.1"/>
    <property type="gene ID" value="AT5G04930"/>
</dbReference>
<dbReference type="KEGG" id="ath:AT5G04930"/>
<dbReference type="Araport" id="AT5G04930"/>
<dbReference type="TAIR" id="AT5G04930">
    <property type="gene designation" value="ALA1"/>
</dbReference>
<dbReference type="eggNOG" id="KOG0206">
    <property type="taxonomic scope" value="Eukaryota"/>
</dbReference>
<dbReference type="HOGENOM" id="CLU_000846_5_2_1"/>
<dbReference type="InParanoid" id="P98204"/>
<dbReference type="OMA" id="DMMIYQR"/>
<dbReference type="PhylomeDB" id="P98204"/>
<dbReference type="BioCyc" id="ARA:AT5G04930-MONOMER"/>
<dbReference type="BRENDA" id="7.6.2.1">
    <property type="organism ID" value="399"/>
</dbReference>
<dbReference type="PRO" id="PR:P98204"/>
<dbReference type="Proteomes" id="UP000006548">
    <property type="component" value="Chromosome 5"/>
</dbReference>
<dbReference type="ExpressionAtlas" id="P98204">
    <property type="expression patterns" value="baseline and differential"/>
</dbReference>
<dbReference type="GO" id="GO:0005789">
    <property type="term" value="C:endoplasmic reticulum membrane"/>
    <property type="evidence" value="ECO:0007669"/>
    <property type="project" value="UniProtKB-SubCell"/>
</dbReference>
<dbReference type="GO" id="GO:0016020">
    <property type="term" value="C:membrane"/>
    <property type="evidence" value="ECO:0000314"/>
    <property type="project" value="TAIR"/>
</dbReference>
<dbReference type="GO" id="GO:0005886">
    <property type="term" value="C:plasma membrane"/>
    <property type="evidence" value="ECO:0000314"/>
    <property type="project" value="TAIR"/>
</dbReference>
<dbReference type="GO" id="GO:0005524">
    <property type="term" value="F:ATP binding"/>
    <property type="evidence" value="ECO:0007669"/>
    <property type="project" value="UniProtKB-KW"/>
</dbReference>
<dbReference type="GO" id="GO:0016887">
    <property type="term" value="F:ATP hydrolysis activity"/>
    <property type="evidence" value="ECO:0007669"/>
    <property type="project" value="InterPro"/>
</dbReference>
<dbReference type="GO" id="GO:0140326">
    <property type="term" value="F:ATPase-coupled intramembrane lipid transporter activity"/>
    <property type="evidence" value="ECO:0007669"/>
    <property type="project" value="UniProtKB-EC"/>
</dbReference>
<dbReference type="GO" id="GO:0000287">
    <property type="term" value="F:magnesium ion binding"/>
    <property type="evidence" value="ECO:0007669"/>
    <property type="project" value="InterPro"/>
</dbReference>
<dbReference type="GO" id="GO:0015914">
    <property type="term" value="P:phospholipid transport"/>
    <property type="evidence" value="ECO:0007669"/>
    <property type="project" value="InterPro"/>
</dbReference>
<dbReference type="CDD" id="cd02073">
    <property type="entry name" value="P-type_ATPase_APLT_Dnf-like"/>
    <property type="match status" value="1"/>
</dbReference>
<dbReference type="FunFam" id="3.40.1110.10:FF:000025">
    <property type="entry name" value="Phospholipid-transporting ATPase"/>
    <property type="match status" value="1"/>
</dbReference>
<dbReference type="FunFam" id="3.40.50.1000:FF:000014">
    <property type="entry name" value="Phospholipid-transporting ATPase"/>
    <property type="match status" value="1"/>
</dbReference>
<dbReference type="Gene3D" id="3.40.1110.10">
    <property type="entry name" value="Calcium-transporting ATPase, cytoplasmic domain N"/>
    <property type="match status" value="1"/>
</dbReference>
<dbReference type="Gene3D" id="2.70.150.10">
    <property type="entry name" value="Calcium-transporting ATPase, cytoplasmic transduction domain A"/>
    <property type="match status" value="1"/>
</dbReference>
<dbReference type="Gene3D" id="3.40.50.1000">
    <property type="entry name" value="HAD superfamily/HAD-like"/>
    <property type="match status" value="1"/>
</dbReference>
<dbReference type="InterPro" id="IPR023299">
    <property type="entry name" value="ATPase_P-typ_cyto_dom_N"/>
</dbReference>
<dbReference type="InterPro" id="IPR018303">
    <property type="entry name" value="ATPase_P-typ_P_site"/>
</dbReference>
<dbReference type="InterPro" id="IPR023298">
    <property type="entry name" value="ATPase_P-typ_TM_dom_sf"/>
</dbReference>
<dbReference type="InterPro" id="IPR008250">
    <property type="entry name" value="ATPase_P-typ_transduc_dom_A_sf"/>
</dbReference>
<dbReference type="InterPro" id="IPR036412">
    <property type="entry name" value="HAD-like_sf"/>
</dbReference>
<dbReference type="InterPro" id="IPR023214">
    <property type="entry name" value="HAD_sf"/>
</dbReference>
<dbReference type="InterPro" id="IPR006539">
    <property type="entry name" value="P-type_ATPase_IV"/>
</dbReference>
<dbReference type="InterPro" id="IPR032631">
    <property type="entry name" value="P-type_ATPase_N"/>
</dbReference>
<dbReference type="InterPro" id="IPR001757">
    <property type="entry name" value="P_typ_ATPase"/>
</dbReference>
<dbReference type="InterPro" id="IPR032630">
    <property type="entry name" value="P_typ_ATPase_c"/>
</dbReference>
<dbReference type="InterPro" id="IPR044492">
    <property type="entry name" value="P_typ_ATPase_HD_dom"/>
</dbReference>
<dbReference type="NCBIfam" id="TIGR01652">
    <property type="entry name" value="ATPase-Plipid"/>
    <property type="match status" value="1"/>
</dbReference>
<dbReference type="NCBIfam" id="TIGR01494">
    <property type="entry name" value="ATPase_P-type"/>
    <property type="match status" value="2"/>
</dbReference>
<dbReference type="PANTHER" id="PTHR24092:SF91">
    <property type="entry name" value="PHOSPHOLIPID-TRANSPORTING ATPASE 1"/>
    <property type="match status" value="1"/>
</dbReference>
<dbReference type="PANTHER" id="PTHR24092">
    <property type="entry name" value="PROBABLE PHOSPHOLIPID-TRANSPORTING ATPASE"/>
    <property type="match status" value="1"/>
</dbReference>
<dbReference type="Pfam" id="PF13246">
    <property type="entry name" value="Cation_ATPase"/>
    <property type="match status" value="1"/>
</dbReference>
<dbReference type="Pfam" id="PF16212">
    <property type="entry name" value="PhoLip_ATPase_C"/>
    <property type="match status" value="1"/>
</dbReference>
<dbReference type="Pfam" id="PF16209">
    <property type="entry name" value="PhoLip_ATPase_N"/>
    <property type="match status" value="1"/>
</dbReference>
<dbReference type="PRINTS" id="PR00119">
    <property type="entry name" value="CATATPASE"/>
</dbReference>
<dbReference type="SFLD" id="SFLDS00003">
    <property type="entry name" value="Haloacid_Dehalogenase"/>
    <property type="match status" value="1"/>
</dbReference>
<dbReference type="SFLD" id="SFLDF00027">
    <property type="entry name" value="p-type_atpase"/>
    <property type="match status" value="1"/>
</dbReference>
<dbReference type="SUPFAM" id="SSF81653">
    <property type="entry name" value="Calcium ATPase, transduction domain A"/>
    <property type="match status" value="1"/>
</dbReference>
<dbReference type="SUPFAM" id="SSF81665">
    <property type="entry name" value="Calcium ATPase, transmembrane domain M"/>
    <property type="match status" value="1"/>
</dbReference>
<dbReference type="SUPFAM" id="SSF56784">
    <property type="entry name" value="HAD-like"/>
    <property type="match status" value="1"/>
</dbReference>
<dbReference type="SUPFAM" id="SSF81660">
    <property type="entry name" value="Metal cation-transporting ATPase, ATP-binding domain N"/>
    <property type="match status" value="1"/>
</dbReference>
<dbReference type="PROSITE" id="PS00154">
    <property type="entry name" value="ATPASE_E1_E2"/>
    <property type="match status" value="1"/>
</dbReference>
<organism>
    <name type="scientific">Arabidopsis thaliana</name>
    <name type="common">Mouse-ear cress</name>
    <dbReference type="NCBI Taxonomy" id="3702"/>
    <lineage>
        <taxon>Eukaryota</taxon>
        <taxon>Viridiplantae</taxon>
        <taxon>Streptophyta</taxon>
        <taxon>Embryophyta</taxon>
        <taxon>Tracheophyta</taxon>
        <taxon>Spermatophyta</taxon>
        <taxon>Magnoliopsida</taxon>
        <taxon>eudicotyledons</taxon>
        <taxon>Gunneridae</taxon>
        <taxon>Pentapetalae</taxon>
        <taxon>rosids</taxon>
        <taxon>malvids</taxon>
        <taxon>Brassicales</taxon>
        <taxon>Brassicaceae</taxon>
        <taxon>Camelineae</taxon>
        <taxon>Arabidopsis</taxon>
    </lineage>
</organism>
<evidence type="ECO:0000250" key="1"/>
<evidence type="ECO:0000255" key="2"/>
<evidence type="ECO:0000256" key="3">
    <source>
        <dbReference type="SAM" id="MobiDB-lite"/>
    </source>
</evidence>
<evidence type="ECO:0000269" key="4">
    <source>
    </source>
</evidence>
<evidence type="ECO:0000269" key="5">
    <source>
    </source>
</evidence>
<evidence type="ECO:0000303" key="6">
    <source>
    </source>
</evidence>
<evidence type="ECO:0000303" key="7">
    <source>
    </source>
</evidence>
<evidence type="ECO:0000305" key="8"/>
<evidence type="ECO:0000305" key="9">
    <source>
    </source>
</evidence>
<evidence type="ECO:0000312" key="10">
    <source>
        <dbReference type="Araport" id="AT5G04930"/>
    </source>
</evidence>
<evidence type="ECO:0000312" key="11">
    <source>
        <dbReference type="EMBL" id="BAB11515.1"/>
    </source>
</evidence>